<reference key="1">
    <citation type="journal article" date="2009" name="Appl. Environ. Microbiol.">
        <title>Three genomes from the phylum Acidobacteria provide insight into the lifestyles of these microorganisms in soils.</title>
        <authorList>
            <person name="Ward N.L."/>
            <person name="Challacombe J.F."/>
            <person name="Janssen P.H."/>
            <person name="Henrissat B."/>
            <person name="Coutinho P.M."/>
            <person name="Wu M."/>
            <person name="Xie G."/>
            <person name="Haft D.H."/>
            <person name="Sait M."/>
            <person name="Badger J."/>
            <person name="Barabote R.D."/>
            <person name="Bradley B."/>
            <person name="Brettin T.S."/>
            <person name="Brinkac L.M."/>
            <person name="Bruce D."/>
            <person name="Creasy T."/>
            <person name="Daugherty S.C."/>
            <person name="Davidsen T.M."/>
            <person name="DeBoy R.T."/>
            <person name="Detter J.C."/>
            <person name="Dodson R.J."/>
            <person name="Durkin A.S."/>
            <person name="Ganapathy A."/>
            <person name="Gwinn-Giglio M."/>
            <person name="Han C.S."/>
            <person name="Khouri H."/>
            <person name="Kiss H."/>
            <person name="Kothari S.P."/>
            <person name="Madupu R."/>
            <person name="Nelson K.E."/>
            <person name="Nelson W.C."/>
            <person name="Paulsen I."/>
            <person name="Penn K."/>
            <person name="Ren Q."/>
            <person name="Rosovitz M.J."/>
            <person name="Selengut J.D."/>
            <person name="Shrivastava S."/>
            <person name="Sullivan S.A."/>
            <person name="Tapia R."/>
            <person name="Thompson L.S."/>
            <person name="Watkins K.L."/>
            <person name="Yang Q."/>
            <person name="Yu C."/>
            <person name="Zafar N."/>
            <person name="Zhou L."/>
            <person name="Kuske C.R."/>
        </authorList>
    </citation>
    <scope>NUCLEOTIDE SEQUENCE [LARGE SCALE GENOMIC DNA]</scope>
    <source>
        <strain>Ellin6076</strain>
    </source>
</reference>
<proteinExistence type="inferred from homology"/>
<evidence type="ECO:0000255" key="1">
    <source>
        <dbReference type="HAMAP-Rule" id="MF_00036"/>
    </source>
</evidence>
<evidence type="ECO:0000256" key="2">
    <source>
        <dbReference type="SAM" id="MobiDB-lite"/>
    </source>
</evidence>
<comment type="function">
    <text evidence="1">Catalyzes the attachment of alanine to tRNA(Ala) in a two-step reaction: alanine is first activated by ATP to form Ala-AMP and then transferred to the acceptor end of tRNA(Ala). Also edits incorrectly charged Ser-tRNA(Ala) and Gly-tRNA(Ala) via its editing domain.</text>
</comment>
<comment type="catalytic activity">
    <reaction evidence="1">
        <text>tRNA(Ala) + L-alanine + ATP = L-alanyl-tRNA(Ala) + AMP + diphosphate</text>
        <dbReference type="Rhea" id="RHEA:12540"/>
        <dbReference type="Rhea" id="RHEA-COMP:9657"/>
        <dbReference type="Rhea" id="RHEA-COMP:9923"/>
        <dbReference type="ChEBI" id="CHEBI:30616"/>
        <dbReference type="ChEBI" id="CHEBI:33019"/>
        <dbReference type="ChEBI" id="CHEBI:57972"/>
        <dbReference type="ChEBI" id="CHEBI:78442"/>
        <dbReference type="ChEBI" id="CHEBI:78497"/>
        <dbReference type="ChEBI" id="CHEBI:456215"/>
        <dbReference type="EC" id="6.1.1.7"/>
    </reaction>
</comment>
<comment type="cofactor">
    <cofactor evidence="1">
        <name>Zn(2+)</name>
        <dbReference type="ChEBI" id="CHEBI:29105"/>
    </cofactor>
    <text evidence="1">Binds 1 zinc ion per subunit.</text>
</comment>
<comment type="subcellular location">
    <subcellularLocation>
        <location evidence="1">Cytoplasm</location>
    </subcellularLocation>
</comment>
<comment type="domain">
    <text evidence="1">Consists of three domains; the N-terminal catalytic domain, the editing domain and the C-terminal C-Ala domain. The editing domain removes incorrectly charged amino acids, while the C-Ala domain, along with tRNA(Ala), serves as a bridge to cooperatively bring together the editing and aminoacylation centers thus stimulating deacylation of misacylated tRNAs.</text>
</comment>
<comment type="similarity">
    <text evidence="1">Belongs to the class-II aminoacyl-tRNA synthetase family.</text>
</comment>
<name>SYA_SOLUE</name>
<sequence>MTGHEIRQRFLDFFAERGHRVVRSSSLVPANDPTLLFTNAGMNQFKDVFLGQEKRDYVRAASSQKCVRAGGKHNDLENVGYTRRHHTFFEMLGNFSFGDYFKADAIAYAWDLITKDYGLPKEKLYVTVFREDDEAEELWQKVTGIPKSRIFRLDEKDNFWQMGETGPCGPCSEIHYDLGIEAAEPGREHEQFPDDAGGRFVEIWNLVFMQYDRDQSGKLNPLPRPSIDTGMGLERIAAILQGKITNYDTDLIYPIIEHAAEIFGVTPGADTRTDTVLRIVADHARATEFLIHDGVVPSNEGRGYVLRKIMRRALRNVRMIGIEDPFLYKLTGFVGELMKGPYPELLESIQRVARVTKDEEHRYATTFLVAERVFNDAIKSIQGNTIPGALSFKLYDTYGLALDEQEDMAREHGLAIDRESFDTEMEQQRERARASWKGAEKAAVTPAYQKLVEQGRTKFLGYSELEAASRVVGLIVDKESVQQVPAGAKAELVLDQTPFYAESGGQVGDHGILYSAAGEKVADVETAFPGVPGLTVHRIAALAPIAVGDTLRAEVAVPLRDATRRNHTATHLLHASLRTVLGKHVKQAGSIVDPGRLRFDFTHYAGLDHAELEEVERLMNQEILRNTAVQTDILPLEQAIATGAMALFGEKYGDQVRVVSVPGFSRELCGGTHVQRTGDIGVAKIVYEGSISAGVRRIEAITGEAALRQYQETSGAVKRVADMVKVSEPALIEHIEKMIANERALEKQVEQLKNKLAQAAVGSLDAEARTIKGVKVVAAHLDGMDRAQMRALADSLRNKWKSAVVVLASVEDGNVAIISAVTKDLTAKVHAGKLASSLAQAVGGKGGGRPDMAEAGGKDPSCLDEALTAVYADVESKL</sequence>
<keyword id="KW-0030">Aminoacyl-tRNA synthetase</keyword>
<keyword id="KW-0067">ATP-binding</keyword>
<keyword id="KW-0963">Cytoplasm</keyword>
<keyword id="KW-0436">Ligase</keyword>
<keyword id="KW-0479">Metal-binding</keyword>
<keyword id="KW-0547">Nucleotide-binding</keyword>
<keyword id="KW-0648">Protein biosynthesis</keyword>
<keyword id="KW-0694">RNA-binding</keyword>
<keyword id="KW-0820">tRNA-binding</keyword>
<keyword id="KW-0862">Zinc</keyword>
<gene>
    <name evidence="1" type="primary">alaS</name>
    <name type="ordered locus">Acid_4756</name>
</gene>
<accession>Q01XA0</accession>
<protein>
    <recommendedName>
        <fullName evidence="1">Alanine--tRNA ligase</fullName>
        <ecNumber evidence="1">6.1.1.7</ecNumber>
    </recommendedName>
    <alternativeName>
        <fullName evidence="1">Alanyl-tRNA synthetase</fullName>
        <shortName evidence="1">AlaRS</shortName>
    </alternativeName>
</protein>
<dbReference type="EC" id="6.1.1.7" evidence="1"/>
<dbReference type="EMBL" id="CP000473">
    <property type="protein sequence ID" value="ABJ85715.1"/>
    <property type="molecule type" value="Genomic_DNA"/>
</dbReference>
<dbReference type="SMR" id="Q01XA0"/>
<dbReference type="FunCoup" id="Q01XA0">
    <property type="interactions" value="662"/>
</dbReference>
<dbReference type="STRING" id="234267.Acid_4756"/>
<dbReference type="KEGG" id="sus:Acid_4756"/>
<dbReference type="eggNOG" id="COG0013">
    <property type="taxonomic scope" value="Bacteria"/>
</dbReference>
<dbReference type="HOGENOM" id="CLU_004485_1_1_0"/>
<dbReference type="InParanoid" id="Q01XA0"/>
<dbReference type="OrthoDB" id="9803884at2"/>
<dbReference type="GO" id="GO:0005829">
    <property type="term" value="C:cytosol"/>
    <property type="evidence" value="ECO:0007669"/>
    <property type="project" value="TreeGrafter"/>
</dbReference>
<dbReference type="GO" id="GO:0004813">
    <property type="term" value="F:alanine-tRNA ligase activity"/>
    <property type="evidence" value="ECO:0007669"/>
    <property type="project" value="UniProtKB-UniRule"/>
</dbReference>
<dbReference type="GO" id="GO:0002161">
    <property type="term" value="F:aminoacyl-tRNA deacylase activity"/>
    <property type="evidence" value="ECO:0007669"/>
    <property type="project" value="TreeGrafter"/>
</dbReference>
<dbReference type="GO" id="GO:0005524">
    <property type="term" value="F:ATP binding"/>
    <property type="evidence" value="ECO:0007669"/>
    <property type="project" value="UniProtKB-UniRule"/>
</dbReference>
<dbReference type="GO" id="GO:0000049">
    <property type="term" value="F:tRNA binding"/>
    <property type="evidence" value="ECO:0007669"/>
    <property type="project" value="UniProtKB-KW"/>
</dbReference>
<dbReference type="GO" id="GO:0008270">
    <property type="term" value="F:zinc ion binding"/>
    <property type="evidence" value="ECO:0007669"/>
    <property type="project" value="UniProtKB-UniRule"/>
</dbReference>
<dbReference type="GO" id="GO:0006419">
    <property type="term" value="P:alanyl-tRNA aminoacylation"/>
    <property type="evidence" value="ECO:0007669"/>
    <property type="project" value="UniProtKB-UniRule"/>
</dbReference>
<dbReference type="CDD" id="cd00673">
    <property type="entry name" value="AlaRS_core"/>
    <property type="match status" value="1"/>
</dbReference>
<dbReference type="FunFam" id="3.10.310.40:FF:000001">
    <property type="entry name" value="Alanine--tRNA ligase"/>
    <property type="match status" value="1"/>
</dbReference>
<dbReference type="FunFam" id="3.30.54.20:FF:000001">
    <property type="entry name" value="Alanine--tRNA ligase"/>
    <property type="match status" value="1"/>
</dbReference>
<dbReference type="FunFam" id="3.30.930.10:FF:000004">
    <property type="entry name" value="Alanine--tRNA ligase"/>
    <property type="match status" value="1"/>
</dbReference>
<dbReference type="FunFam" id="3.30.980.10:FF:000004">
    <property type="entry name" value="Alanine--tRNA ligase, cytoplasmic"/>
    <property type="match status" value="1"/>
</dbReference>
<dbReference type="Gene3D" id="2.40.30.130">
    <property type="match status" value="1"/>
</dbReference>
<dbReference type="Gene3D" id="3.10.310.40">
    <property type="match status" value="1"/>
</dbReference>
<dbReference type="Gene3D" id="3.30.54.20">
    <property type="match status" value="1"/>
</dbReference>
<dbReference type="Gene3D" id="6.10.250.550">
    <property type="match status" value="1"/>
</dbReference>
<dbReference type="Gene3D" id="3.30.930.10">
    <property type="entry name" value="Bira Bifunctional Protein, Domain 2"/>
    <property type="match status" value="1"/>
</dbReference>
<dbReference type="Gene3D" id="3.30.980.10">
    <property type="entry name" value="Threonyl-trna Synthetase, Chain A, domain 2"/>
    <property type="match status" value="1"/>
</dbReference>
<dbReference type="HAMAP" id="MF_00036_B">
    <property type="entry name" value="Ala_tRNA_synth_B"/>
    <property type="match status" value="1"/>
</dbReference>
<dbReference type="InterPro" id="IPR045864">
    <property type="entry name" value="aa-tRNA-synth_II/BPL/LPL"/>
</dbReference>
<dbReference type="InterPro" id="IPR002318">
    <property type="entry name" value="Ala-tRNA-lgiase_IIc"/>
</dbReference>
<dbReference type="InterPro" id="IPR018162">
    <property type="entry name" value="Ala-tRNA-ligase_IIc_anticod-bd"/>
</dbReference>
<dbReference type="InterPro" id="IPR018165">
    <property type="entry name" value="Ala-tRNA-synth_IIc_core"/>
</dbReference>
<dbReference type="InterPro" id="IPR018164">
    <property type="entry name" value="Ala-tRNA-synth_IIc_N"/>
</dbReference>
<dbReference type="InterPro" id="IPR050058">
    <property type="entry name" value="Ala-tRNA_ligase"/>
</dbReference>
<dbReference type="InterPro" id="IPR023033">
    <property type="entry name" value="Ala_tRNA_ligase_euk/bac"/>
</dbReference>
<dbReference type="InterPro" id="IPR003156">
    <property type="entry name" value="DHHA1_dom"/>
</dbReference>
<dbReference type="InterPro" id="IPR018163">
    <property type="entry name" value="Thr/Ala-tRNA-synth_IIc_edit"/>
</dbReference>
<dbReference type="InterPro" id="IPR009000">
    <property type="entry name" value="Transl_B-barrel_sf"/>
</dbReference>
<dbReference type="InterPro" id="IPR012947">
    <property type="entry name" value="tRNA_SAD"/>
</dbReference>
<dbReference type="NCBIfam" id="TIGR00344">
    <property type="entry name" value="alaS"/>
    <property type="match status" value="1"/>
</dbReference>
<dbReference type="PANTHER" id="PTHR11777:SF9">
    <property type="entry name" value="ALANINE--TRNA LIGASE, CYTOPLASMIC"/>
    <property type="match status" value="1"/>
</dbReference>
<dbReference type="PANTHER" id="PTHR11777">
    <property type="entry name" value="ALANYL-TRNA SYNTHETASE"/>
    <property type="match status" value="1"/>
</dbReference>
<dbReference type="Pfam" id="PF02272">
    <property type="entry name" value="DHHA1"/>
    <property type="match status" value="1"/>
</dbReference>
<dbReference type="Pfam" id="PF01411">
    <property type="entry name" value="tRNA-synt_2c"/>
    <property type="match status" value="1"/>
</dbReference>
<dbReference type="Pfam" id="PF07973">
    <property type="entry name" value="tRNA_SAD"/>
    <property type="match status" value="1"/>
</dbReference>
<dbReference type="PRINTS" id="PR00980">
    <property type="entry name" value="TRNASYNTHALA"/>
</dbReference>
<dbReference type="SMART" id="SM00863">
    <property type="entry name" value="tRNA_SAD"/>
    <property type="match status" value="1"/>
</dbReference>
<dbReference type="SUPFAM" id="SSF55681">
    <property type="entry name" value="Class II aaRS and biotin synthetases"/>
    <property type="match status" value="1"/>
</dbReference>
<dbReference type="SUPFAM" id="SSF101353">
    <property type="entry name" value="Putative anticodon-binding domain of alanyl-tRNA synthetase (AlaRS)"/>
    <property type="match status" value="1"/>
</dbReference>
<dbReference type="SUPFAM" id="SSF55186">
    <property type="entry name" value="ThrRS/AlaRS common domain"/>
    <property type="match status" value="1"/>
</dbReference>
<dbReference type="SUPFAM" id="SSF50447">
    <property type="entry name" value="Translation proteins"/>
    <property type="match status" value="1"/>
</dbReference>
<dbReference type="PROSITE" id="PS50860">
    <property type="entry name" value="AA_TRNA_LIGASE_II_ALA"/>
    <property type="match status" value="1"/>
</dbReference>
<feature type="chain" id="PRO_0000347804" description="Alanine--tRNA ligase">
    <location>
        <begin position="1"/>
        <end position="878"/>
    </location>
</feature>
<feature type="region of interest" description="Disordered" evidence="2">
    <location>
        <begin position="841"/>
        <end position="860"/>
    </location>
</feature>
<feature type="binding site" evidence="1">
    <location>
        <position position="567"/>
    </location>
    <ligand>
        <name>Zn(2+)</name>
        <dbReference type="ChEBI" id="CHEBI:29105"/>
    </ligand>
</feature>
<feature type="binding site" evidence="1">
    <location>
        <position position="571"/>
    </location>
    <ligand>
        <name>Zn(2+)</name>
        <dbReference type="ChEBI" id="CHEBI:29105"/>
    </ligand>
</feature>
<feature type="binding site" evidence="1">
    <location>
        <position position="669"/>
    </location>
    <ligand>
        <name>Zn(2+)</name>
        <dbReference type="ChEBI" id="CHEBI:29105"/>
    </ligand>
</feature>
<feature type="binding site" evidence="1">
    <location>
        <position position="673"/>
    </location>
    <ligand>
        <name>Zn(2+)</name>
        <dbReference type="ChEBI" id="CHEBI:29105"/>
    </ligand>
</feature>
<organism>
    <name type="scientific">Solibacter usitatus (strain Ellin6076)</name>
    <dbReference type="NCBI Taxonomy" id="234267"/>
    <lineage>
        <taxon>Bacteria</taxon>
        <taxon>Pseudomonadati</taxon>
        <taxon>Acidobacteriota</taxon>
        <taxon>Terriglobia</taxon>
        <taxon>Bryobacterales</taxon>
        <taxon>Solibacteraceae</taxon>
        <taxon>Candidatus Solibacter</taxon>
    </lineage>
</organism>